<dbReference type="EC" id="3.5.1.44" evidence="1"/>
<dbReference type="EMBL" id="AM902716">
    <property type="protein sequence ID" value="CAP40831.1"/>
    <property type="molecule type" value="Genomic_DNA"/>
</dbReference>
<dbReference type="SMR" id="A9I174"/>
<dbReference type="STRING" id="94624.Bpet0499"/>
<dbReference type="KEGG" id="bpt:Bpet0499"/>
<dbReference type="eggNOG" id="COG1871">
    <property type="taxonomic scope" value="Bacteria"/>
</dbReference>
<dbReference type="Proteomes" id="UP000001225">
    <property type="component" value="Chromosome"/>
</dbReference>
<dbReference type="GO" id="GO:0050568">
    <property type="term" value="F:protein-glutamine glutaminase activity"/>
    <property type="evidence" value="ECO:0007669"/>
    <property type="project" value="UniProtKB-UniRule"/>
</dbReference>
<dbReference type="GO" id="GO:0006935">
    <property type="term" value="P:chemotaxis"/>
    <property type="evidence" value="ECO:0007669"/>
    <property type="project" value="UniProtKB-UniRule"/>
</dbReference>
<dbReference type="CDD" id="cd16352">
    <property type="entry name" value="CheD"/>
    <property type="match status" value="1"/>
</dbReference>
<dbReference type="Gene3D" id="3.30.1330.200">
    <property type="match status" value="1"/>
</dbReference>
<dbReference type="HAMAP" id="MF_01440">
    <property type="entry name" value="CheD"/>
    <property type="match status" value="1"/>
</dbReference>
<dbReference type="InterPro" id="IPR038592">
    <property type="entry name" value="CheD-like_sf"/>
</dbReference>
<dbReference type="InterPro" id="IPR005659">
    <property type="entry name" value="Chemorcpt_Glu_NH3ase_CheD"/>
</dbReference>
<dbReference type="InterPro" id="IPR011324">
    <property type="entry name" value="Cytotoxic_necrot_fac-like_cat"/>
</dbReference>
<dbReference type="NCBIfam" id="NF010013">
    <property type="entry name" value="PRK13487.1"/>
    <property type="match status" value="1"/>
</dbReference>
<dbReference type="NCBIfam" id="NF010014">
    <property type="entry name" value="PRK13489.1"/>
    <property type="match status" value="1"/>
</dbReference>
<dbReference type="PANTHER" id="PTHR35147">
    <property type="entry name" value="CHEMORECEPTOR GLUTAMINE DEAMIDASE CHED-RELATED"/>
    <property type="match status" value="1"/>
</dbReference>
<dbReference type="PANTHER" id="PTHR35147:SF2">
    <property type="entry name" value="CHEMORECEPTOR GLUTAMINE DEAMIDASE CHED-RELATED"/>
    <property type="match status" value="1"/>
</dbReference>
<dbReference type="Pfam" id="PF03975">
    <property type="entry name" value="CheD"/>
    <property type="match status" value="1"/>
</dbReference>
<dbReference type="SUPFAM" id="SSF64438">
    <property type="entry name" value="CNF1/YfiH-like putative cysteine hydrolases"/>
    <property type="match status" value="1"/>
</dbReference>
<reference key="1">
    <citation type="journal article" date="2008" name="BMC Genomics">
        <title>The missing link: Bordetella petrii is endowed with both the metabolic versatility of environmental bacteria and virulence traits of pathogenic Bordetellae.</title>
        <authorList>
            <person name="Gross R."/>
            <person name="Guzman C.A."/>
            <person name="Sebaihia M."/>
            <person name="Martin dos Santos V.A.P."/>
            <person name="Pieper D.H."/>
            <person name="Koebnik R."/>
            <person name="Lechner M."/>
            <person name="Bartels D."/>
            <person name="Buhrmester J."/>
            <person name="Choudhuri J.V."/>
            <person name="Ebensen T."/>
            <person name="Gaigalat L."/>
            <person name="Herrmann S."/>
            <person name="Khachane A.N."/>
            <person name="Larisch C."/>
            <person name="Link S."/>
            <person name="Linke B."/>
            <person name="Meyer F."/>
            <person name="Mormann S."/>
            <person name="Nakunst D."/>
            <person name="Rueckert C."/>
            <person name="Schneiker-Bekel S."/>
            <person name="Schulze K."/>
            <person name="Voerholter F.-J."/>
            <person name="Yevsa T."/>
            <person name="Engle J.T."/>
            <person name="Goldman W.E."/>
            <person name="Puehler A."/>
            <person name="Goebel U.B."/>
            <person name="Goesmann A."/>
            <person name="Bloecker H."/>
            <person name="Kaiser O."/>
            <person name="Martinez-Arias R."/>
        </authorList>
    </citation>
    <scope>NUCLEOTIDE SEQUENCE [LARGE SCALE GENOMIC DNA]</scope>
    <source>
        <strain>ATCC BAA-461 / DSM 12804 / CCUG 43448</strain>
    </source>
</reference>
<accession>A9I174</accession>
<protein>
    <recommendedName>
        <fullName evidence="1">Probable chemoreceptor glutamine deamidase CheD</fullName>
        <ecNumber evidence="1">3.5.1.44</ecNumber>
    </recommendedName>
</protein>
<gene>
    <name evidence="1" type="primary">cheD</name>
    <name type="ordered locus">Bpet0499</name>
</gene>
<name>CHED_BORPD</name>
<keyword id="KW-0145">Chemotaxis</keyword>
<keyword id="KW-0378">Hydrolase</keyword>
<comment type="function">
    <text evidence="1">Probably deamidates glutamine residues to glutamate on methyl-accepting chemotaxis receptors (MCPs), playing an important role in chemotaxis.</text>
</comment>
<comment type="catalytic activity">
    <reaction evidence="1">
        <text>L-glutaminyl-[protein] + H2O = L-glutamyl-[protein] + NH4(+)</text>
        <dbReference type="Rhea" id="RHEA:16441"/>
        <dbReference type="Rhea" id="RHEA-COMP:10207"/>
        <dbReference type="Rhea" id="RHEA-COMP:10208"/>
        <dbReference type="ChEBI" id="CHEBI:15377"/>
        <dbReference type="ChEBI" id="CHEBI:28938"/>
        <dbReference type="ChEBI" id="CHEBI:29973"/>
        <dbReference type="ChEBI" id="CHEBI:30011"/>
        <dbReference type="EC" id="3.5.1.44"/>
    </reaction>
</comment>
<comment type="similarity">
    <text evidence="1">Belongs to the CheD family.</text>
</comment>
<evidence type="ECO:0000255" key="1">
    <source>
        <dbReference type="HAMAP-Rule" id="MF_01440"/>
    </source>
</evidence>
<evidence type="ECO:0000256" key="2">
    <source>
        <dbReference type="SAM" id="MobiDB-lite"/>
    </source>
</evidence>
<proteinExistence type="inferred from homology"/>
<sequence length="223" mass="24376">MPSRLDARATRHYFDSAFHCPAVKVLPNEYYVAAGEDIMISTVLGSCVAACIRDPRAGVGGMNHFMLPEGDGDSPSSATMRYGAFAMEVLINELLKAGAARERLEAKVFGGGAVLSAMQQMNIGERNARFVLNYLNTEGIPVLAQDLGDVHARRIGYFPRDGRVMVRRLAPHHHKAEVLIAQREQVAAQTASAKAHTPPQIERFSAPAKPRFERFTRPSTATS</sequence>
<organism>
    <name type="scientific">Bordetella petrii (strain ATCC BAA-461 / DSM 12804 / CCUG 43448)</name>
    <dbReference type="NCBI Taxonomy" id="340100"/>
    <lineage>
        <taxon>Bacteria</taxon>
        <taxon>Pseudomonadati</taxon>
        <taxon>Pseudomonadota</taxon>
        <taxon>Betaproteobacteria</taxon>
        <taxon>Burkholderiales</taxon>
        <taxon>Alcaligenaceae</taxon>
        <taxon>Bordetella</taxon>
    </lineage>
</organism>
<feature type="chain" id="PRO_1000145885" description="Probable chemoreceptor glutamine deamidase CheD">
    <location>
        <begin position="1"/>
        <end position="223"/>
    </location>
</feature>
<feature type="region of interest" description="Disordered" evidence="2">
    <location>
        <begin position="189"/>
        <end position="223"/>
    </location>
</feature>